<keyword id="KW-0131">Cell cycle</keyword>
<keyword id="KW-0132">Cell division</keyword>
<keyword id="KW-0137">Centromere</keyword>
<keyword id="KW-0158">Chromosome</keyword>
<keyword id="KW-0159">Chromosome partition</keyword>
<keyword id="KW-0995">Kinetochore</keyword>
<keyword id="KW-0493">Microtubule</keyword>
<keyword id="KW-0498">Mitosis</keyword>
<keyword id="KW-0539">Nucleus</keyword>
<keyword id="KW-1185">Reference proteome</keyword>
<proteinExistence type="evidence at protein level"/>
<dbReference type="EMBL" id="CU329670">
    <property type="protein sequence ID" value="CAB66166.1"/>
    <property type="molecule type" value="Genomic_DNA"/>
</dbReference>
<dbReference type="PIR" id="T50105">
    <property type="entry name" value="T50105"/>
</dbReference>
<dbReference type="RefSeq" id="NP_593658.1">
    <property type="nucleotide sequence ID" value="NM_001019090.2"/>
</dbReference>
<dbReference type="SMR" id="Q9US26"/>
<dbReference type="BioGRID" id="278831">
    <property type="interactions" value="11"/>
</dbReference>
<dbReference type="STRING" id="284812.Q9US26"/>
<dbReference type="iPTMnet" id="Q9US26"/>
<dbReference type="PaxDb" id="4896-SPAC1783.03.1"/>
<dbReference type="EnsemblFungi" id="SPAC1783.03.1">
    <property type="protein sequence ID" value="SPAC1783.03.1:pep"/>
    <property type="gene ID" value="SPAC1783.03"/>
</dbReference>
<dbReference type="GeneID" id="2542367"/>
<dbReference type="KEGG" id="spo:2542367"/>
<dbReference type="PomBase" id="SPAC1783.03">
    <property type="gene designation" value="fta2"/>
</dbReference>
<dbReference type="VEuPathDB" id="FungiDB:SPAC1783.03"/>
<dbReference type="HOGENOM" id="CLU_806888_0_0_1"/>
<dbReference type="InParanoid" id="Q9US26"/>
<dbReference type="OMA" id="SMFGYYH"/>
<dbReference type="PRO" id="PR:Q9US26"/>
<dbReference type="Proteomes" id="UP000002485">
    <property type="component" value="Chromosome I"/>
</dbReference>
<dbReference type="GO" id="GO:0000939">
    <property type="term" value="C:inner kinetochore"/>
    <property type="evidence" value="ECO:0000314"/>
    <property type="project" value="PomBase"/>
</dbReference>
<dbReference type="GO" id="GO:0000776">
    <property type="term" value="C:kinetochore"/>
    <property type="evidence" value="ECO:0000314"/>
    <property type="project" value="PomBase"/>
</dbReference>
<dbReference type="GO" id="GO:0005874">
    <property type="term" value="C:microtubule"/>
    <property type="evidence" value="ECO:0007669"/>
    <property type="project" value="UniProtKB-KW"/>
</dbReference>
<dbReference type="GO" id="GO:0031511">
    <property type="term" value="C:Mis6-Sim4 complex"/>
    <property type="evidence" value="ECO:0000314"/>
    <property type="project" value="PomBase"/>
</dbReference>
<dbReference type="GO" id="GO:0005634">
    <property type="term" value="C:nucleus"/>
    <property type="evidence" value="ECO:0007005"/>
    <property type="project" value="PomBase"/>
</dbReference>
<dbReference type="GO" id="GO:0051315">
    <property type="term" value="P:attachment of mitotic spindle microtubules to kinetochore"/>
    <property type="evidence" value="ECO:0000315"/>
    <property type="project" value="PomBase"/>
</dbReference>
<dbReference type="GO" id="GO:0051301">
    <property type="term" value="P:cell division"/>
    <property type="evidence" value="ECO:0007669"/>
    <property type="project" value="UniProtKB-KW"/>
</dbReference>
<dbReference type="GO" id="GO:0000070">
    <property type="term" value="P:mitotic sister chromatid segregation"/>
    <property type="evidence" value="ECO:0000316"/>
    <property type="project" value="PomBase"/>
</dbReference>
<dbReference type="InterPro" id="IPR025213">
    <property type="entry name" value="Sim4_Fta2"/>
</dbReference>
<dbReference type="Pfam" id="PF13095">
    <property type="entry name" value="FTA2"/>
    <property type="match status" value="1"/>
</dbReference>
<comment type="function">
    <text evidence="3">Component of the kinetochore, a multiprotein complex that assembles on centromeric DNA and attaches chromosomes to spindle microtubules, mediating chromosome segregation and sister chromatid segregation during meiosis and mitosis. Component of the inner kinetochore COMA complex, which connects centromere-associated proteins and the outer kinetochore. COMA interacts with other inner kinetochore proteins to form the inner kinetochore constitutive centromere-associated network (CCAN), which serves as a structural platform for outer kinetochore assembly (PubMed:16079914). Fta2, fta3 and fta4 associate with the central core (cnt) and inner repeat (inr) region of the centromere (PubMed:16079914).</text>
</comment>
<comment type="subunit">
    <text evidence="1 3">Component of the heterotetrameric kinetochore subcomplex COMA, which consists of fta2, fta7, mal2 and mis17 (By similarity). The COMA subcomplex is part of a larger constitutive centromere-associated network (CCAN) (also known as central kinetochore Sim4 complex in fission yeast), which is composed of at least cnl2, cnp3, cnp20, fta1, fta2, fta3, fta4, fta6, fta7, mal2, mhf1, mhf2, mis6, mis15, mis17, sim4 and wip1 (PubMed:16079914).</text>
</comment>
<comment type="subcellular location">
    <subcellularLocation>
        <location>Nucleus</location>
    </subcellularLocation>
    <subcellularLocation>
        <location>Chromosome</location>
        <location>Centromere</location>
        <location>Kinetochore</location>
    </subcellularLocation>
</comment>
<comment type="similarity">
    <text evidence="4">Belongs to the CENP-P/CTF19 family.</text>
</comment>
<accession>Q9US26</accession>
<name>CENPP_SCHPO</name>
<reference key="1">
    <citation type="journal article" date="2002" name="Nature">
        <title>The genome sequence of Schizosaccharomyces pombe.</title>
        <authorList>
            <person name="Wood V."/>
            <person name="Gwilliam R."/>
            <person name="Rajandream M.A."/>
            <person name="Lyne M.H."/>
            <person name="Lyne R."/>
            <person name="Stewart A."/>
            <person name="Sgouros J.G."/>
            <person name="Peat N."/>
            <person name="Hayles J."/>
            <person name="Baker S.G."/>
            <person name="Basham D."/>
            <person name="Bowman S."/>
            <person name="Brooks K."/>
            <person name="Brown D."/>
            <person name="Brown S."/>
            <person name="Chillingworth T."/>
            <person name="Churcher C.M."/>
            <person name="Collins M."/>
            <person name="Connor R."/>
            <person name="Cronin A."/>
            <person name="Davis P."/>
            <person name="Feltwell T."/>
            <person name="Fraser A."/>
            <person name="Gentles S."/>
            <person name="Goble A."/>
            <person name="Hamlin N."/>
            <person name="Harris D.E."/>
            <person name="Hidalgo J."/>
            <person name="Hodgson G."/>
            <person name="Holroyd S."/>
            <person name="Hornsby T."/>
            <person name="Howarth S."/>
            <person name="Huckle E.J."/>
            <person name="Hunt S."/>
            <person name="Jagels K."/>
            <person name="James K.D."/>
            <person name="Jones L."/>
            <person name="Jones M."/>
            <person name="Leather S."/>
            <person name="McDonald S."/>
            <person name="McLean J."/>
            <person name="Mooney P."/>
            <person name="Moule S."/>
            <person name="Mungall K.L."/>
            <person name="Murphy L.D."/>
            <person name="Niblett D."/>
            <person name="Odell C."/>
            <person name="Oliver K."/>
            <person name="O'Neil S."/>
            <person name="Pearson D."/>
            <person name="Quail M.A."/>
            <person name="Rabbinowitsch E."/>
            <person name="Rutherford K.M."/>
            <person name="Rutter S."/>
            <person name="Saunders D."/>
            <person name="Seeger K."/>
            <person name="Sharp S."/>
            <person name="Skelton J."/>
            <person name="Simmonds M.N."/>
            <person name="Squares R."/>
            <person name="Squares S."/>
            <person name="Stevens K."/>
            <person name="Taylor K."/>
            <person name="Taylor R.G."/>
            <person name="Tivey A."/>
            <person name="Walsh S.V."/>
            <person name="Warren T."/>
            <person name="Whitehead S."/>
            <person name="Woodward J.R."/>
            <person name="Volckaert G."/>
            <person name="Aert R."/>
            <person name="Robben J."/>
            <person name="Grymonprez B."/>
            <person name="Weltjens I."/>
            <person name="Vanstreels E."/>
            <person name="Rieger M."/>
            <person name="Schaefer M."/>
            <person name="Mueller-Auer S."/>
            <person name="Gabel C."/>
            <person name="Fuchs M."/>
            <person name="Duesterhoeft A."/>
            <person name="Fritzc C."/>
            <person name="Holzer E."/>
            <person name="Moestl D."/>
            <person name="Hilbert H."/>
            <person name="Borzym K."/>
            <person name="Langer I."/>
            <person name="Beck A."/>
            <person name="Lehrach H."/>
            <person name="Reinhardt R."/>
            <person name="Pohl T.M."/>
            <person name="Eger P."/>
            <person name="Zimmermann W."/>
            <person name="Wedler H."/>
            <person name="Wambutt R."/>
            <person name="Purnelle B."/>
            <person name="Goffeau A."/>
            <person name="Cadieu E."/>
            <person name="Dreano S."/>
            <person name="Gloux S."/>
            <person name="Lelaure V."/>
            <person name="Mottier S."/>
            <person name="Galibert F."/>
            <person name="Aves S.J."/>
            <person name="Xiang Z."/>
            <person name="Hunt C."/>
            <person name="Moore K."/>
            <person name="Hurst S.M."/>
            <person name="Lucas M."/>
            <person name="Rochet M."/>
            <person name="Gaillardin C."/>
            <person name="Tallada V.A."/>
            <person name="Garzon A."/>
            <person name="Thode G."/>
            <person name="Daga R.R."/>
            <person name="Cruzado L."/>
            <person name="Jimenez J."/>
            <person name="Sanchez M."/>
            <person name="del Rey F."/>
            <person name="Benito J."/>
            <person name="Dominguez A."/>
            <person name="Revuelta J.L."/>
            <person name="Moreno S."/>
            <person name="Armstrong J."/>
            <person name="Forsburg S.L."/>
            <person name="Cerutti L."/>
            <person name="Lowe T."/>
            <person name="McCombie W.R."/>
            <person name="Paulsen I."/>
            <person name="Potashkin J."/>
            <person name="Shpakovski G.V."/>
            <person name="Ussery D."/>
            <person name="Barrell B.G."/>
            <person name="Nurse P."/>
        </authorList>
    </citation>
    <scope>NUCLEOTIDE SEQUENCE [LARGE SCALE GENOMIC DNA]</scope>
    <source>
        <strain>972 / ATCC 24843</strain>
    </source>
</reference>
<reference key="2">
    <citation type="journal article" date="2005" name="EMBO J.">
        <title>Molecular analysis of kinetochore architecture in fission yeast.</title>
        <authorList>
            <person name="Liu X."/>
            <person name="McLeod I."/>
            <person name="Anderson S."/>
            <person name="Yates J.R. III"/>
            <person name="He X."/>
        </authorList>
    </citation>
    <scope>FUNCTION</scope>
    <scope>IDENTIFICATION IN THE SIM4 COMPLEX</scope>
    <scope>SUBCELLULAR LOCATION</scope>
</reference>
<reference key="3">
    <citation type="journal article" date="2006" name="Nat. Biotechnol.">
        <title>ORFeome cloning and global analysis of protein localization in the fission yeast Schizosaccharomyces pombe.</title>
        <authorList>
            <person name="Matsuyama A."/>
            <person name="Arai R."/>
            <person name="Yashiroda Y."/>
            <person name="Shirai A."/>
            <person name="Kamata A."/>
            <person name="Sekido S."/>
            <person name="Kobayashi Y."/>
            <person name="Hashimoto A."/>
            <person name="Hamamoto M."/>
            <person name="Hiraoka Y."/>
            <person name="Horinouchi S."/>
            <person name="Yoshida M."/>
        </authorList>
    </citation>
    <scope>SUBCELLULAR LOCATION [LARGE SCALE ANALYSIS]</scope>
</reference>
<protein>
    <recommendedName>
        <fullName>Inner kinetochore subunit fta2</fullName>
    </recommendedName>
    <alternativeName>
        <fullName>CENP-P homolog</fullName>
    </alternativeName>
    <alternativeName>
        <fullName>Constitutive centromere-associated network protein fta2</fullName>
    </alternativeName>
    <alternativeName>
        <fullName>Sim4 complex subunit fta2</fullName>
    </alternativeName>
    <alternativeName>
        <fullName>Sim4-mal2-associated protein 2</fullName>
    </alternativeName>
</protein>
<feature type="chain" id="PRO_0000290638" description="Inner kinetochore subunit fta2">
    <location>
        <begin position="1"/>
        <end position="351"/>
    </location>
</feature>
<feature type="region of interest" description="Disordered" evidence="2">
    <location>
        <begin position="1"/>
        <end position="71"/>
    </location>
</feature>
<feature type="compositionally biased region" description="Low complexity" evidence="2">
    <location>
        <begin position="7"/>
        <end position="18"/>
    </location>
</feature>
<feature type="compositionally biased region" description="Polar residues" evidence="2">
    <location>
        <begin position="54"/>
        <end position="66"/>
    </location>
</feature>
<organism>
    <name type="scientific">Schizosaccharomyces pombe (strain 972 / ATCC 24843)</name>
    <name type="common">Fission yeast</name>
    <dbReference type="NCBI Taxonomy" id="284812"/>
    <lineage>
        <taxon>Eukaryota</taxon>
        <taxon>Fungi</taxon>
        <taxon>Dikarya</taxon>
        <taxon>Ascomycota</taxon>
        <taxon>Taphrinomycotina</taxon>
        <taxon>Schizosaccharomycetes</taxon>
        <taxon>Schizosaccharomycetales</taxon>
        <taxon>Schizosaccharomycetaceae</taxon>
        <taxon>Schizosaccharomyces</taxon>
    </lineage>
</organism>
<gene>
    <name type="primary">fta2</name>
    <name type="synonym">sma2</name>
    <name type="ORF">SPAC1783.03</name>
</gene>
<evidence type="ECO:0000250" key="1">
    <source>
        <dbReference type="UniProtKB" id="Q02732"/>
    </source>
</evidence>
<evidence type="ECO:0000256" key="2">
    <source>
        <dbReference type="SAM" id="MobiDB-lite"/>
    </source>
</evidence>
<evidence type="ECO:0000269" key="3">
    <source>
    </source>
</evidence>
<evidence type="ECO:0000305" key="4"/>
<sequence length="351" mass="40505">MSGRRYSQISQQEGSSSSDDSDSQQKKTKRTVAHRSPNTTLNGMPRVDSRARPNENSGQSKSSNGRVDTDRKMDLLRKRSNLVHQTLLLEKEVRVRRNAINQRDDSFLSGFIKSLLEIDSSVVIYNTENPDNPKTKQVMPSAEPKKHVKLNSSISSIRFTQHEFEAESEKIIHHSLKGDIEYLPSFKFLLEIKVRTIDYALLFITYKIPHFARKELSSFSDSAIQCLDIVALLRAFSLFAHHYSYRCNTWFYLSKHMKKVASANMDAQCFYVQNSFYKITILYEIKFDDLGFVQPNYCISYILKNQNEKIVSITSKLLNQLDKRFSEFVSLFGFREGSLLLLQALFKPHLG</sequence>